<gene>
    <name evidence="1" type="primary">murB</name>
    <name type="ordered locus">SAB0690c</name>
</gene>
<feature type="chain" id="PRO_1000002916" description="UDP-N-acetylenolpyruvoylglucosamine reductase">
    <location>
        <begin position="1"/>
        <end position="307"/>
    </location>
</feature>
<feature type="domain" description="FAD-binding PCMH-type" evidence="1">
    <location>
        <begin position="33"/>
        <end position="197"/>
    </location>
</feature>
<feature type="active site" evidence="1">
    <location>
        <position position="176"/>
    </location>
</feature>
<feature type="active site" description="Proton donor" evidence="1">
    <location>
        <position position="226"/>
    </location>
</feature>
<feature type="active site" evidence="1">
    <location>
        <position position="296"/>
    </location>
</feature>
<comment type="function">
    <text evidence="1">Cell wall formation.</text>
</comment>
<comment type="catalytic activity">
    <reaction evidence="1">
        <text>UDP-N-acetyl-alpha-D-muramate + NADP(+) = UDP-N-acetyl-3-O-(1-carboxyvinyl)-alpha-D-glucosamine + NADPH + H(+)</text>
        <dbReference type="Rhea" id="RHEA:12248"/>
        <dbReference type="ChEBI" id="CHEBI:15378"/>
        <dbReference type="ChEBI" id="CHEBI:57783"/>
        <dbReference type="ChEBI" id="CHEBI:58349"/>
        <dbReference type="ChEBI" id="CHEBI:68483"/>
        <dbReference type="ChEBI" id="CHEBI:70757"/>
        <dbReference type="EC" id="1.3.1.98"/>
    </reaction>
</comment>
<comment type="cofactor">
    <cofactor evidence="1">
        <name>FAD</name>
        <dbReference type="ChEBI" id="CHEBI:57692"/>
    </cofactor>
</comment>
<comment type="pathway">
    <text evidence="1">Cell wall biogenesis; peptidoglycan biosynthesis.</text>
</comment>
<comment type="subcellular location">
    <subcellularLocation>
        <location evidence="1">Cytoplasm</location>
    </subcellularLocation>
</comment>
<comment type="similarity">
    <text evidence="1">Belongs to the MurB family.</text>
</comment>
<proteinExistence type="inferred from homology"/>
<protein>
    <recommendedName>
        <fullName evidence="1">UDP-N-acetylenolpyruvoylglucosamine reductase</fullName>
        <ecNumber evidence="1">1.3.1.98</ecNumber>
    </recommendedName>
    <alternativeName>
        <fullName evidence="1">UDP-N-acetylmuramate dehydrogenase</fullName>
    </alternativeName>
</protein>
<accession>Q2YSJ1</accession>
<sequence>MINKDIYQALQQLIPNEKIKVDEPLKRYTYTKTGGNADFYITPTKNEEVQAVVKYAYQNEIPVTYLGNGSNIIIREGGIRGIVISLLSLDHIEVSDDAIIAGSGAAIIDVSRVARDYALTGLEFACGIPGSIGGAVYMNAGAYGGEVKDCIDYALCVNEQGSLIKLTTKELELDYRNSIIQKEHLVVLEAAFTLAPGKMTEIQAKMDDLTERRESKQPLEYPSCGSVFQRPPGHFAGKLIQDSNLQGHRIGGVEVSTKHAGFMVNVDNGTATDYENLIHYVQKTVKEKFGIELNREVRIIGEHPKES</sequence>
<evidence type="ECO:0000255" key="1">
    <source>
        <dbReference type="HAMAP-Rule" id="MF_00037"/>
    </source>
</evidence>
<dbReference type="EC" id="1.3.1.98" evidence="1"/>
<dbReference type="EMBL" id="AJ938182">
    <property type="protein sequence ID" value="CAI80378.1"/>
    <property type="molecule type" value="Genomic_DNA"/>
</dbReference>
<dbReference type="RefSeq" id="WP_000608440.1">
    <property type="nucleotide sequence ID" value="NC_007622.1"/>
</dbReference>
<dbReference type="SMR" id="Q2YSJ1"/>
<dbReference type="KEGG" id="sab:SAB0690c"/>
<dbReference type="HOGENOM" id="CLU_035304_1_1_9"/>
<dbReference type="UniPathway" id="UPA00219"/>
<dbReference type="GO" id="GO:0005829">
    <property type="term" value="C:cytosol"/>
    <property type="evidence" value="ECO:0007669"/>
    <property type="project" value="TreeGrafter"/>
</dbReference>
<dbReference type="GO" id="GO:0071949">
    <property type="term" value="F:FAD binding"/>
    <property type="evidence" value="ECO:0007669"/>
    <property type="project" value="InterPro"/>
</dbReference>
<dbReference type="GO" id="GO:0008762">
    <property type="term" value="F:UDP-N-acetylmuramate dehydrogenase activity"/>
    <property type="evidence" value="ECO:0007669"/>
    <property type="project" value="UniProtKB-UniRule"/>
</dbReference>
<dbReference type="GO" id="GO:0051301">
    <property type="term" value="P:cell division"/>
    <property type="evidence" value="ECO:0007669"/>
    <property type="project" value="UniProtKB-KW"/>
</dbReference>
<dbReference type="GO" id="GO:0071555">
    <property type="term" value="P:cell wall organization"/>
    <property type="evidence" value="ECO:0007669"/>
    <property type="project" value="UniProtKB-KW"/>
</dbReference>
<dbReference type="GO" id="GO:0009252">
    <property type="term" value="P:peptidoglycan biosynthetic process"/>
    <property type="evidence" value="ECO:0007669"/>
    <property type="project" value="UniProtKB-UniRule"/>
</dbReference>
<dbReference type="GO" id="GO:0008360">
    <property type="term" value="P:regulation of cell shape"/>
    <property type="evidence" value="ECO:0007669"/>
    <property type="project" value="UniProtKB-KW"/>
</dbReference>
<dbReference type="FunFam" id="3.90.78.10:FF:000001">
    <property type="entry name" value="UDP-N-acetylenolpyruvoylglucosamine reductase"/>
    <property type="match status" value="1"/>
</dbReference>
<dbReference type="Gene3D" id="3.30.465.10">
    <property type="match status" value="1"/>
</dbReference>
<dbReference type="Gene3D" id="3.90.78.10">
    <property type="entry name" value="UDP-N-acetylenolpyruvoylglucosamine reductase, C-terminal domain"/>
    <property type="match status" value="1"/>
</dbReference>
<dbReference type="Gene3D" id="3.30.43.10">
    <property type="entry name" value="Uridine Diphospho-n-acetylenolpyruvylglucosamine Reductase, domain 2"/>
    <property type="match status" value="1"/>
</dbReference>
<dbReference type="HAMAP" id="MF_00037">
    <property type="entry name" value="MurB"/>
    <property type="match status" value="1"/>
</dbReference>
<dbReference type="InterPro" id="IPR016166">
    <property type="entry name" value="FAD-bd_PCMH"/>
</dbReference>
<dbReference type="InterPro" id="IPR036318">
    <property type="entry name" value="FAD-bd_PCMH-like_sf"/>
</dbReference>
<dbReference type="InterPro" id="IPR016167">
    <property type="entry name" value="FAD-bd_PCMH_sub1"/>
</dbReference>
<dbReference type="InterPro" id="IPR016169">
    <property type="entry name" value="FAD-bd_PCMH_sub2"/>
</dbReference>
<dbReference type="InterPro" id="IPR003170">
    <property type="entry name" value="MurB"/>
</dbReference>
<dbReference type="InterPro" id="IPR011601">
    <property type="entry name" value="MurB_C"/>
</dbReference>
<dbReference type="InterPro" id="IPR036635">
    <property type="entry name" value="MurB_C_sf"/>
</dbReference>
<dbReference type="InterPro" id="IPR006094">
    <property type="entry name" value="Oxid_FAD_bind_N"/>
</dbReference>
<dbReference type="NCBIfam" id="TIGR00179">
    <property type="entry name" value="murB"/>
    <property type="match status" value="1"/>
</dbReference>
<dbReference type="NCBIfam" id="NF010480">
    <property type="entry name" value="PRK13905.1"/>
    <property type="match status" value="1"/>
</dbReference>
<dbReference type="PANTHER" id="PTHR21071">
    <property type="entry name" value="UDP-N-ACETYLENOLPYRUVOYLGLUCOSAMINE REDUCTASE"/>
    <property type="match status" value="1"/>
</dbReference>
<dbReference type="PANTHER" id="PTHR21071:SF4">
    <property type="entry name" value="UDP-N-ACETYLENOLPYRUVOYLGLUCOSAMINE REDUCTASE"/>
    <property type="match status" value="1"/>
</dbReference>
<dbReference type="Pfam" id="PF01565">
    <property type="entry name" value="FAD_binding_4"/>
    <property type="match status" value="1"/>
</dbReference>
<dbReference type="Pfam" id="PF02873">
    <property type="entry name" value="MurB_C"/>
    <property type="match status" value="1"/>
</dbReference>
<dbReference type="SUPFAM" id="SSF56176">
    <property type="entry name" value="FAD-binding/transporter-associated domain-like"/>
    <property type="match status" value="1"/>
</dbReference>
<dbReference type="SUPFAM" id="SSF56194">
    <property type="entry name" value="Uridine diphospho-N-Acetylenolpyruvylglucosamine reductase, MurB, C-terminal domain"/>
    <property type="match status" value="1"/>
</dbReference>
<dbReference type="PROSITE" id="PS51387">
    <property type="entry name" value="FAD_PCMH"/>
    <property type="match status" value="1"/>
</dbReference>
<organism>
    <name type="scientific">Staphylococcus aureus (strain bovine RF122 / ET3-1)</name>
    <dbReference type="NCBI Taxonomy" id="273036"/>
    <lineage>
        <taxon>Bacteria</taxon>
        <taxon>Bacillati</taxon>
        <taxon>Bacillota</taxon>
        <taxon>Bacilli</taxon>
        <taxon>Bacillales</taxon>
        <taxon>Staphylococcaceae</taxon>
        <taxon>Staphylococcus</taxon>
    </lineage>
</organism>
<name>MURB_STAAB</name>
<reference key="1">
    <citation type="journal article" date="2007" name="PLoS ONE">
        <title>Molecular correlates of host specialization in Staphylococcus aureus.</title>
        <authorList>
            <person name="Herron-Olson L."/>
            <person name="Fitzgerald J.R."/>
            <person name="Musser J.M."/>
            <person name="Kapur V."/>
        </authorList>
    </citation>
    <scope>NUCLEOTIDE SEQUENCE [LARGE SCALE GENOMIC DNA]</scope>
    <source>
        <strain>bovine RF122 / ET3-1</strain>
    </source>
</reference>
<keyword id="KW-0131">Cell cycle</keyword>
<keyword id="KW-0132">Cell division</keyword>
<keyword id="KW-0133">Cell shape</keyword>
<keyword id="KW-0961">Cell wall biogenesis/degradation</keyword>
<keyword id="KW-0963">Cytoplasm</keyword>
<keyword id="KW-0274">FAD</keyword>
<keyword id="KW-0285">Flavoprotein</keyword>
<keyword id="KW-0521">NADP</keyword>
<keyword id="KW-0560">Oxidoreductase</keyword>
<keyword id="KW-0573">Peptidoglycan synthesis</keyword>